<accession>O31966</accession>
<name>YOMR_BACSU</name>
<organism>
    <name type="scientific">Bacillus subtilis (strain 168)</name>
    <dbReference type="NCBI Taxonomy" id="224308"/>
    <lineage>
        <taxon>Bacteria</taxon>
        <taxon>Bacillati</taxon>
        <taxon>Bacillota</taxon>
        <taxon>Bacilli</taxon>
        <taxon>Bacillales</taxon>
        <taxon>Bacillaceae</taxon>
        <taxon>Bacillus</taxon>
    </lineage>
</organism>
<dbReference type="EMBL" id="AL009126">
    <property type="protein sequence ID" value="CAB14043.1"/>
    <property type="molecule type" value="Genomic_DNA"/>
</dbReference>
<dbReference type="RefSeq" id="NP_390008.1">
    <property type="nucleotide sequence ID" value="NC_000964.3"/>
</dbReference>
<dbReference type="RefSeq" id="WP_004399226.1">
    <property type="nucleotide sequence ID" value="NZ_OZ025638.1"/>
</dbReference>
<dbReference type="SMR" id="O31966"/>
<dbReference type="FunCoup" id="O31966">
    <property type="interactions" value="60"/>
</dbReference>
<dbReference type="STRING" id="224308.BSU21250"/>
<dbReference type="PaxDb" id="224308-BSU21250"/>
<dbReference type="EnsemblBacteria" id="CAB14043">
    <property type="protein sequence ID" value="CAB14043"/>
    <property type="gene ID" value="BSU_21250"/>
</dbReference>
<dbReference type="GeneID" id="939147"/>
<dbReference type="KEGG" id="bsu:BSU21250"/>
<dbReference type="PATRIC" id="fig|224308.179.peg.2320"/>
<dbReference type="eggNOG" id="ENOG502ZQEV">
    <property type="taxonomic scope" value="Bacteria"/>
</dbReference>
<dbReference type="InParanoid" id="O31966"/>
<dbReference type="OrthoDB" id="2897555at2"/>
<dbReference type="BioCyc" id="BSUB:BSU21250-MONOMER"/>
<dbReference type="Proteomes" id="UP000001570">
    <property type="component" value="Chromosome"/>
</dbReference>
<evidence type="ECO:0000255" key="1"/>
<keyword id="KW-0175">Coiled coil</keyword>
<keyword id="KW-1185">Reference proteome</keyword>
<sequence length="405" mass="44825">MSSSKYVGQLKQNNIQINSLRGSNDRAEKHMLEHEQALTEKTNLFMEYQQNELKKHTDDKSNPHLVTKEQVGLGNVLNNVQATKEEFDEHLNDTLNPHSVTKSQVGLANVLNEKQATKTEFDQHAQDTIIHITASERTTWNAAESNSKKYTDAHSQNTNNPHKVTAIQVGLGNLTNDKQATKLEFDAHIKDNERHITSTERSKWNSAQLTKISSDDGQPLVSITSDFHSELLNSPTLTYFGYDKAALEAPPSNGRGFWTCSADKLYGQAIVLTNDNKTYRKSLINGAWSSWERLISSSEIDNVPWLSVTYKNGAKTGSRPLQYRKVAGTLQLSGHVVTNRDVVFASIPTEFSPTQGAVKSVEVSGTFGRSKLFVNSNGDLQLSGVSADNSAAITGYYIDVVVPLN</sequence>
<gene>
    <name type="primary">yomR</name>
    <name type="ordered locus">BSU21250</name>
</gene>
<proteinExistence type="predicted"/>
<reference key="1">
    <citation type="journal article" date="1997" name="Nature">
        <title>The complete genome sequence of the Gram-positive bacterium Bacillus subtilis.</title>
        <authorList>
            <person name="Kunst F."/>
            <person name="Ogasawara N."/>
            <person name="Moszer I."/>
            <person name="Albertini A.M."/>
            <person name="Alloni G."/>
            <person name="Azevedo V."/>
            <person name="Bertero M.G."/>
            <person name="Bessieres P."/>
            <person name="Bolotin A."/>
            <person name="Borchert S."/>
            <person name="Borriss R."/>
            <person name="Boursier L."/>
            <person name="Brans A."/>
            <person name="Braun M."/>
            <person name="Brignell S.C."/>
            <person name="Bron S."/>
            <person name="Brouillet S."/>
            <person name="Bruschi C.V."/>
            <person name="Caldwell B."/>
            <person name="Capuano V."/>
            <person name="Carter N.M."/>
            <person name="Choi S.-K."/>
            <person name="Codani J.-J."/>
            <person name="Connerton I.F."/>
            <person name="Cummings N.J."/>
            <person name="Daniel R.A."/>
            <person name="Denizot F."/>
            <person name="Devine K.M."/>
            <person name="Duesterhoeft A."/>
            <person name="Ehrlich S.D."/>
            <person name="Emmerson P.T."/>
            <person name="Entian K.-D."/>
            <person name="Errington J."/>
            <person name="Fabret C."/>
            <person name="Ferrari E."/>
            <person name="Foulger D."/>
            <person name="Fritz C."/>
            <person name="Fujita M."/>
            <person name="Fujita Y."/>
            <person name="Fuma S."/>
            <person name="Galizzi A."/>
            <person name="Galleron N."/>
            <person name="Ghim S.-Y."/>
            <person name="Glaser P."/>
            <person name="Goffeau A."/>
            <person name="Golightly E.J."/>
            <person name="Grandi G."/>
            <person name="Guiseppi G."/>
            <person name="Guy B.J."/>
            <person name="Haga K."/>
            <person name="Haiech J."/>
            <person name="Harwood C.R."/>
            <person name="Henaut A."/>
            <person name="Hilbert H."/>
            <person name="Holsappel S."/>
            <person name="Hosono S."/>
            <person name="Hullo M.-F."/>
            <person name="Itaya M."/>
            <person name="Jones L.-M."/>
            <person name="Joris B."/>
            <person name="Karamata D."/>
            <person name="Kasahara Y."/>
            <person name="Klaerr-Blanchard M."/>
            <person name="Klein C."/>
            <person name="Kobayashi Y."/>
            <person name="Koetter P."/>
            <person name="Koningstein G."/>
            <person name="Krogh S."/>
            <person name="Kumano M."/>
            <person name="Kurita K."/>
            <person name="Lapidus A."/>
            <person name="Lardinois S."/>
            <person name="Lauber J."/>
            <person name="Lazarevic V."/>
            <person name="Lee S.-M."/>
            <person name="Levine A."/>
            <person name="Liu H."/>
            <person name="Masuda S."/>
            <person name="Mauel C."/>
            <person name="Medigue C."/>
            <person name="Medina N."/>
            <person name="Mellado R.P."/>
            <person name="Mizuno M."/>
            <person name="Moestl D."/>
            <person name="Nakai S."/>
            <person name="Noback M."/>
            <person name="Noone D."/>
            <person name="O'Reilly M."/>
            <person name="Ogawa K."/>
            <person name="Ogiwara A."/>
            <person name="Oudega B."/>
            <person name="Park S.-H."/>
            <person name="Parro V."/>
            <person name="Pohl T.M."/>
            <person name="Portetelle D."/>
            <person name="Porwollik S."/>
            <person name="Prescott A.M."/>
            <person name="Presecan E."/>
            <person name="Pujic P."/>
            <person name="Purnelle B."/>
            <person name="Rapoport G."/>
            <person name="Rey M."/>
            <person name="Reynolds S."/>
            <person name="Rieger M."/>
            <person name="Rivolta C."/>
            <person name="Rocha E."/>
            <person name="Roche B."/>
            <person name="Rose M."/>
            <person name="Sadaie Y."/>
            <person name="Sato T."/>
            <person name="Scanlan E."/>
            <person name="Schleich S."/>
            <person name="Schroeter R."/>
            <person name="Scoffone F."/>
            <person name="Sekiguchi J."/>
            <person name="Sekowska A."/>
            <person name="Seror S.J."/>
            <person name="Serror P."/>
            <person name="Shin B.-S."/>
            <person name="Soldo B."/>
            <person name="Sorokin A."/>
            <person name="Tacconi E."/>
            <person name="Takagi T."/>
            <person name="Takahashi H."/>
            <person name="Takemaru K."/>
            <person name="Takeuchi M."/>
            <person name="Tamakoshi A."/>
            <person name="Tanaka T."/>
            <person name="Terpstra P."/>
            <person name="Tognoni A."/>
            <person name="Tosato V."/>
            <person name="Uchiyama S."/>
            <person name="Vandenbol M."/>
            <person name="Vannier F."/>
            <person name="Vassarotti A."/>
            <person name="Viari A."/>
            <person name="Wambutt R."/>
            <person name="Wedler E."/>
            <person name="Wedler H."/>
            <person name="Weitzenegger T."/>
            <person name="Winters P."/>
            <person name="Wipat A."/>
            <person name="Yamamoto H."/>
            <person name="Yamane K."/>
            <person name="Yasumoto K."/>
            <person name="Yata K."/>
            <person name="Yoshida K."/>
            <person name="Yoshikawa H.-F."/>
            <person name="Zumstein E."/>
            <person name="Yoshikawa H."/>
            <person name="Danchin A."/>
        </authorList>
    </citation>
    <scope>NUCLEOTIDE SEQUENCE [LARGE SCALE GENOMIC DNA]</scope>
    <source>
        <strain>168</strain>
    </source>
</reference>
<feature type="chain" id="PRO_0000360596" description="SPbeta prophage-derived uncharacterized protein YomR">
    <location>
        <begin position="1"/>
        <end position="405"/>
    </location>
</feature>
<feature type="coiled-coil region" evidence="1">
    <location>
        <begin position="9"/>
        <end position="36"/>
    </location>
</feature>
<protein>
    <recommendedName>
        <fullName>SPbeta prophage-derived uncharacterized protein YomR</fullName>
    </recommendedName>
</protein>